<keyword id="KW-0002">3D-structure</keyword>
<keyword id="KW-0414">Isoprene biosynthesis</keyword>
<keyword id="KW-0456">Lyase</keyword>
<keyword id="KW-0479">Metal-binding</keyword>
<gene>
    <name evidence="1" type="primary">ispF</name>
    <name type="ordered locus">BURPS1106A_2400</name>
</gene>
<evidence type="ECO:0000255" key="1">
    <source>
        <dbReference type="HAMAP-Rule" id="MF_00107"/>
    </source>
</evidence>
<evidence type="ECO:0007829" key="2">
    <source>
        <dbReference type="PDB" id="5L12"/>
    </source>
</evidence>
<comment type="function">
    <text evidence="1">Involved in the biosynthesis of isopentenyl diphosphate (IPP) and dimethylallyl diphosphate (DMAPP), two major building blocks of isoprenoid compounds. Catalyzes the conversion of 4-diphosphocytidyl-2-C-methyl-D-erythritol 2-phosphate (CDP-ME2P) to 2-C-methyl-D-erythritol 2,4-cyclodiphosphate (ME-CPP) with a corresponding release of cytidine 5-monophosphate (CMP).</text>
</comment>
<comment type="catalytic activity">
    <reaction evidence="1">
        <text>4-CDP-2-C-methyl-D-erythritol 2-phosphate = 2-C-methyl-D-erythritol 2,4-cyclic diphosphate + CMP</text>
        <dbReference type="Rhea" id="RHEA:23864"/>
        <dbReference type="ChEBI" id="CHEBI:57919"/>
        <dbReference type="ChEBI" id="CHEBI:58483"/>
        <dbReference type="ChEBI" id="CHEBI:60377"/>
        <dbReference type="EC" id="4.6.1.12"/>
    </reaction>
</comment>
<comment type="cofactor">
    <cofactor evidence="1">
        <name>a divalent metal cation</name>
        <dbReference type="ChEBI" id="CHEBI:60240"/>
    </cofactor>
    <text evidence="1">Binds 1 divalent metal cation per subunit.</text>
</comment>
<comment type="pathway">
    <text evidence="1">Isoprenoid biosynthesis; isopentenyl diphosphate biosynthesis via DXP pathway; isopentenyl diphosphate from 1-deoxy-D-xylulose 5-phosphate: step 4/6.</text>
</comment>
<comment type="subunit">
    <text evidence="1">Homotrimer.</text>
</comment>
<comment type="similarity">
    <text evidence="1">Belongs to the IspF family.</text>
</comment>
<proteinExistence type="evidence at protein level"/>
<accession>A3NWD9</accession>
<protein>
    <recommendedName>
        <fullName evidence="1">2-C-methyl-D-erythritol 2,4-cyclodiphosphate synthase</fullName>
        <shortName evidence="1">MECDP-synthase</shortName>
        <shortName evidence="1">MECPP-synthase</shortName>
        <shortName evidence="1">MECPS</shortName>
        <ecNumber evidence="1">4.6.1.12</ecNumber>
    </recommendedName>
</protein>
<reference key="1">
    <citation type="journal article" date="2010" name="Genome Biol. Evol.">
        <title>Continuing evolution of Burkholderia mallei through genome reduction and large-scale rearrangements.</title>
        <authorList>
            <person name="Losada L."/>
            <person name="Ronning C.M."/>
            <person name="DeShazer D."/>
            <person name="Woods D."/>
            <person name="Fedorova N."/>
            <person name="Kim H.S."/>
            <person name="Shabalina S.A."/>
            <person name="Pearson T.R."/>
            <person name="Brinkac L."/>
            <person name="Tan P."/>
            <person name="Nandi T."/>
            <person name="Crabtree J."/>
            <person name="Badger J."/>
            <person name="Beckstrom-Sternberg S."/>
            <person name="Saqib M."/>
            <person name="Schutzer S.E."/>
            <person name="Keim P."/>
            <person name="Nierman W.C."/>
        </authorList>
    </citation>
    <scope>NUCLEOTIDE SEQUENCE [LARGE SCALE GENOMIC DNA]</scope>
    <source>
        <strain>1106a</strain>
    </source>
</reference>
<feature type="chain" id="PRO_1000022815" description="2-C-methyl-D-erythritol 2,4-cyclodiphosphate synthase">
    <location>
        <begin position="1"/>
        <end position="162"/>
    </location>
</feature>
<feature type="binding site" evidence="1">
    <location>
        <begin position="10"/>
        <end position="12"/>
    </location>
    <ligand>
        <name>4-CDP-2-C-methyl-D-erythritol 2-phosphate</name>
        <dbReference type="ChEBI" id="CHEBI:57919"/>
    </ligand>
</feature>
<feature type="binding site" evidence="1">
    <location>
        <position position="10"/>
    </location>
    <ligand>
        <name>a divalent metal cation</name>
        <dbReference type="ChEBI" id="CHEBI:60240"/>
    </ligand>
</feature>
<feature type="binding site" evidence="1">
    <location>
        <position position="12"/>
    </location>
    <ligand>
        <name>a divalent metal cation</name>
        <dbReference type="ChEBI" id="CHEBI:60240"/>
    </ligand>
</feature>
<feature type="binding site" evidence="1">
    <location>
        <begin position="36"/>
        <end position="37"/>
    </location>
    <ligand>
        <name>4-CDP-2-C-methyl-D-erythritol 2-phosphate</name>
        <dbReference type="ChEBI" id="CHEBI:57919"/>
    </ligand>
</feature>
<feature type="binding site" evidence="1">
    <location>
        <position position="44"/>
    </location>
    <ligand>
        <name>a divalent metal cation</name>
        <dbReference type="ChEBI" id="CHEBI:60240"/>
    </ligand>
</feature>
<feature type="binding site" evidence="1">
    <location>
        <begin position="58"/>
        <end position="60"/>
    </location>
    <ligand>
        <name>4-CDP-2-C-methyl-D-erythritol 2-phosphate</name>
        <dbReference type="ChEBI" id="CHEBI:57919"/>
    </ligand>
</feature>
<feature type="binding site" evidence="1">
    <location>
        <begin position="63"/>
        <end position="67"/>
    </location>
    <ligand>
        <name>4-CDP-2-C-methyl-D-erythritol 2-phosphate</name>
        <dbReference type="ChEBI" id="CHEBI:57919"/>
    </ligand>
</feature>
<feature type="binding site" evidence="1">
    <location>
        <position position="144"/>
    </location>
    <ligand>
        <name>4-CDP-2-C-methyl-D-erythritol 2-phosphate</name>
        <dbReference type="ChEBI" id="CHEBI:57919"/>
    </ligand>
</feature>
<feature type="site" description="Transition state stabilizer" evidence="1">
    <location>
        <position position="36"/>
    </location>
</feature>
<feature type="site" description="Transition state stabilizer" evidence="1">
    <location>
        <position position="135"/>
    </location>
</feature>
<feature type="strand" evidence="2">
    <location>
        <begin position="3"/>
        <end position="16"/>
    </location>
</feature>
<feature type="strand" evidence="2">
    <location>
        <begin position="20"/>
        <end position="22"/>
    </location>
</feature>
<feature type="strand" evidence="2">
    <location>
        <begin position="25"/>
        <end position="27"/>
    </location>
</feature>
<feature type="strand" evidence="2">
    <location>
        <begin position="30"/>
        <end position="33"/>
    </location>
</feature>
<feature type="strand" evidence="2">
    <location>
        <begin position="35"/>
        <end position="37"/>
    </location>
</feature>
<feature type="helix" evidence="2">
    <location>
        <begin position="41"/>
        <end position="53"/>
    </location>
</feature>
<feature type="helix" evidence="2">
    <location>
        <begin position="59"/>
        <end position="62"/>
    </location>
</feature>
<feature type="helix" evidence="2">
    <location>
        <begin position="68"/>
        <end position="70"/>
    </location>
</feature>
<feature type="helix" evidence="2">
    <location>
        <begin position="75"/>
        <end position="88"/>
    </location>
</feature>
<feature type="strand" evidence="2">
    <location>
        <begin position="92"/>
        <end position="101"/>
    </location>
</feature>
<feature type="strand" evidence="2">
    <location>
        <begin position="103"/>
        <end position="105"/>
    </location>
</feature>
<feature type="helix" evidence="2">
    <location>
        <begin position="108"/>
        <end position="110"/>
    </location>
</feature>
<feature type="helix" evidence="2">
    <location>
        <begin position="111"/>
        <end position="122"/>
    </location>
</feature>
<feature type="helix" evidence="2">
    <location>
        <begin position="126"/>
        <end position="128"/>
    </location>
</feature>
<feature type="strand" evidence="2">
    <location>
        <begin position="132"/>
        <end position="134"/>
    </location>
</feature>
<feature type="helix" evidence="2">
    <location>
        <begin position="140"/>
        <end position="143"/>
    </location>
</feature>
<feature type="strand" evidence="2">
    <location>
        <begin position="146"/>
        <end position="157"/>
    </location>
</feature>
<sequence length="162" mass="17175">MDFRIGQGYDVHQLVPGRPLIIGGVTIPYERGLLGHSDADVLLHAITDALFGAAALGDIGRHFSDTDPRFKGADSRALLRECASRVAQAGFAIRNVDSTIIAQAPKLAPHIDAMRANIAADLDLPLDRVNVKAKTNEKLGYLGRGEGIEAQAAALVVREAAA</sequence>
<name>ISPF_BURP0</name>
<organism>
    <name type="scientific">Burkholderia pseudomallei (strain 1106a)</name>
    <dbReference type="NCBI Taxonomy" id="357348"/>
    <lineage>
        <taxon>Bacteria</taxon>
        <taxon>Pseudomonadati</taxon>
        <taxon>Pseudomonadota</taxon>
        <taxon>Betaproteobacteria</taxon>
        <taxon>Burkholderiales</taxon>
        <taxon>Burkholderiaceae</taxon>
        <taxon>Burkholderia</taxon>
        <taxon>pseudomallei group</taxon>
    </lineage>
</organism>
<dbReference type="EC" id="4.6.1.12" evidence="1"/>
<dbReference type="EMBL" id="CP000572">
    <property type="protein sequence ID" value="ABN89575.1"/>
    <property type="molecule type" value="Genomic_DNA"/>
</dbReference>
<dbReference type="RefSeq" id="WP_004191369.1">
    <property type="nucleotide sequence ID" value="NC_009076.1"/>
</dbReference>
<dbReference type="PDB" id="5L12">
    <property type="method" value="X-ray"/>
    <property type="resolution" value="1.72 A"/>
    <property type="chains" value="A/B/C=1-158"/>
</dbReference>
<dbReference type="PDBsum" id="5L12"/>
<dbReference type="SMR" id="A3NWD9"/>
<dbReference type="GeneID" id="93060627"/>
<dbReference type="KEGG" id="bpl:BURPS1106A_2400"/>
<dbReference type="HOGENOM" id="CLU_084630_2_0_4"/>
<dbReference type="UniPathway" id="UPA00056">
    <property type="reaction ID" value="UER00095"/>
</dbReference>
<dbReference type="Proteomes" id="UP000006738">
    <property type="component" value="Chromosome I"/>
</dbReference>
<dbReference type="GO" id="GO:0008685">
    <property type="term" value="F:2-C-methyl-D-erythritol 2,4-cyclodiphosphate synthase activity"/>
    <property type="evidence" value="ECO:0007669"/>
    <property type="project" value="UniProtKB-UniRule"/>
</dbReference>
<dbReference type="GO" id="GO:0046872">
    <property type="term" value="F:metal ion binding"/>
    <property type="evidence" value="ECO:0007669"/>
    <property type="project" value="UniProtKB-KW"/>
</dbReference>
<dbReference type="GO" id="GO:0019288">
    <property type="term" value="P:isopentenyl diphosphate biosynthetic process, methylerythritol 4-phosphate pathway"/>
    <property type="evidence" value="ECO:0007669"/>
    <property type="project" value="UniProtKB-UniRule"/>
</dbReference>
<dbReference type="GO" id="GO:0016114">
    <property type="term" value="P:terpenoid biosynthetic process"/>
    <property type="evidence" value="ECO:0007669"/>
    <property type="project" value="InterPro"/>
</dbReference>
<dbReference type="CDD" id="cd00554">
    <property type="entry name" value="MECDP_synthase"/>
    <property type="match status" value="1"/>
</dbReference>
<dbReference type="FunFam" id="3.30.1330.50:FF:000001">
    <property type="entry name" value="2-C-methyl-D-erythritol 2,4-cyclodiphosphate synthase"/>
    <property type="match status" value="1"/>
</dbReference>
<dbReference type="Gene3D" id="3.30.1330.50">
    <property type="entry name" value="2-C-methyl-D-erythritol 2,4-cyclodiphosphate synthase"/>
    <property type="match status" value="1"/>
</dbReference>
<dbReference type="HAMAP" id="MF_00107">
    <property type="entry name" value="IspF"/>
    <property type="match status" value="1"/>
</dbReference>
<dbReference type="InterPro" id="IPR003526">
    <property type="entry name" value="MECDP_synthase"/>
</dbReference>
<dbReference type="InterPro" id="IPR020555">
    <property type="entry name" value="MECDP_synthase_CS"/>
</dbReference>
<dbReference type="InterPro" id="IPR036571">
    <property type="entry name" value="MECDP_synthase_sf"/>
</dbReference>
<dbReference type="NCBIfam" id="TIGR00151">
    <property type="entry name" value="ispF"/>
    <property type="match status" value="1"/>
</dbReference>
<dbReference type="PANTHER" id="PTHR43181">
    <property type="entry name" value="2-C-METHYL-D-ERYTHRITOL 2,4-CYCLODIPHOSPHATE SYNTHASE, CHLOROPLASTIC"/>
    <property type="match status" value="1"/>
</dbReference>
<dbReference type="PANTHER" id="PTHR43181:SF1">
    <property type="entry name" value="2-C-METHYL-D-ERYTHRITOL 2,4-CYCLODIPHOSPHATE SYNTHASE, CHLOROPLASTIC"/>
    <property type="match status" value="1"/>
</dbReference>
<dbReference type="Pfam" id="PF02542">
    <property type="entry name" value="YgbB"/>
    <property type="match status" value="1"/>
</dbReference>
<dbReference type="SUPFAM" id="SSF69765">
    <property type="entry name" value="IpsF-like"/>
    <property type="match status" value="1"/>
</dbReference>
<dbReference type="PROSITE" id="PS01350">
    <property type="entry name" value="ISPF"/>
    <property type="match status" value="1"/>
</dbReference>